<keyword id="KW-0694">RNA-binding</keyword>
<keyword id="KW-0346">Stress response</keyword>
<dbReference type="EMBL" id="AL513382">
    <property type="protein sequence ID" value="CAD06838.1"/>
    <property type="molecule type" value="Genomic_DNA"/>
</dbReference>
<dbReference type="EMBL" id="AE014613">
    <property type="protein sequence ID" value="AAO71861.1"/>
    <property type="molecule type" value="Genomic_DNA"/>
</dbReference>
<dbReference type="RefSeq" id="NP_458797.1">
    <property type="nucleotide sequence ID" value="NC_003198.1"/>
</dbReference>
<dbReference type="RefSeq" id="WP_001051875.1">
    <property type="nucleotide sequence ID" value="NZ_WSUR01000012.1"/>
</dbReference>
<dbReference type="SMR" id="P0A1R1"/>
<dbReference type="STRING" id="220341.gene:17588538"/>
<dbReference type="KEGG" id="stt:t4412"/>
<dbReference type="KEGG" id="sty:STY4718"/>
<dbReference type="PATRIC" id="fig|220341.7.peg.4819"/>
<dbReference type="eggNOG" id="COG1923">
    <property type="taxonomic scope" value="Bacteria"/>
</dbReference>
<dbReference type="HOGENOM" id="CLU_113688_2_1_6"/>
<dbReference type="OMA" id="QQMVYKH"/>
<dbReference type="OrthoDB" id="9799751at2"/>
<dbReference type="Proteomes" id="UP000000541">
    <property type="component" value="Chromosome"/>
</dbReference>
<dbReference type="Proteomes" id="UP000002670">
    <property type="component" value="Chromosome"/>
</dbReference>
<dbReference type="GO" id="GO:0005829">
    <property type="term" value="C:cytosol"/>
    <property type="evidence" value="ECO:0007669"/>
    <property type="project" value="TreeGrafter"/>
</dbReference>
<dbReference type="GO" id="GO:0003723">
    <property type="term" value="F:RNA binding"/>
    <property type="evidence" value="ECO:0007669"/>
    <property type="project" value="UniProtKB-UniRule"/>
</dbReference>
<dbReference type="GO" id="GO:0006355">
    <property type="term" value="P:regulation of DNA-templated transcription"/>
    <property type="evidence" value="ECO:0007669"/>
    <property type="project" value="InterPro"/>
</dbReference>
<dbReference type="GO" id="GO:0043487">
    <property type="term" value="P:regulation of RNA stability"/>
    <property type="evidence" value="ECO:0007669"/>
    <property type="project" value="TreeGrafter"/>
</dbReference>
<dbReference type="GO" id="GO:0045974">
    <property type="term" value="P:regulation of translation, ncRNA-mediated"/>
    <property type="evidence" value="ECO:0007669"/>
    <property type="project" value="TreeGrafter"/>
</dbReference>
<dbReference type="CDD" id="cd01716">
    <property type="entry name" value="Hfq"/>
    <property type="match status" value="1"/>
</dbReference>
<dbReference type="FunFam" id="2.30.30.100:FF:000001">
    <property type="entry name" value="RNA-binding protein Hfq"/>
    <property type="match status" value="1"/>
</dbReference>
<dbReference type="Gene3D" id="2.30.30.100">
    <property type="match status" value="1"/>
</dbReference>
<dbReference type="HAMAP" id="MF_00436">
    <property type="entry name" value="Hfq"/>
    <property type="match status" value="1"/>
</dbReference>
<dbReference type="InterPro" id="IPR005001">
    <property type="entry name" value="Hfq"/>
</dbReference>
<dbReference type="InterPro" id="IPR010920">
    <property type="entry name" value="LSM_dom_sf"/>
</dbReference>
<dbReference type="InterPro" id="IPR047575">
    <property type="entry name" value="Sm"/>
</dbReference>
<dbReference type="NCBIfam" id="TIGR02383">
    <property type="entry name" value="Hfq"/>
    <property type="match status" value="1"/>
</dbReference>
<dbReference type="NCBIfam" id="NF001602">
    <property type="entry name" value="PRK00395.1"/>
    <property type="match status" value="1"/>
</dbReference>
<dbReference type="PANTHER" id="PTHR34772">
    <property type="entry name" value="RNA-BINDING PROTEIN HFQ"/>
    <property type="match status" value="1"/>
</dbReference>
<dbReference type="PANTHER" id="PTHR34772:SF1">
    <property type="entry name" value="RNA-BINDING PROTEIN HFQ"/>
    <property type="match status" value="1"/>
</dbReference>
<dbReference type="Pfam" id="PF17209">
    <property type="entry name" value="Hfq"/>
    <property type="match status" value="1"/>
</dbReference>
<dbReference type="SUPFAM" id="SSF50182">
    <property type="entry name" value="Sm-like ribonucleoproteins"/>
    <property type="match status" value="1"/>
</dbReference>
<dbReference type="PROSITE" id="PS52002">
    <property type="entry name" value="SM"/>
    <property type="match status" value="1"/>
</dbReference>
<gene>
    <name evidence="2" type="primary">hfq</name>
    <name type="ordered locus">STY4718</name>
    <name type="ordered locus">t4412</name>
</gene>
<comment type="function">
    <text evidence="2">RNA chaperone that binds small regulatory RNA (sRNAs) and mRNAs to facilitate mRNA translational regulation in response to envelope stress, environmental stress and changes in metabolite concentrations. Also binds with high specificity to tRNAs.</text>
</comment>
<comment type="subunit">
    <text evidence="2">Homohexamer.</text>
</comment>
<comment type="similarity">
    <text evidence="2">Belongs to the Hfq family.</text>
</comment>
<accession>P0A1R1</accession>
<accession>Q56059</accession>
<organism>
    <name type="scientific">Salmonella typhi</name>
    <dbReference type="NCBI Taxonomy" id="90370"/>
    <lineage>
        <taxon>Bacteria</taxon>
        <taxon>Pseudomonadati</taxon>
        <taxon>Pseudomonadota</taxon>
        <taxon>Gammaproteobacteria</taxon>
        <taxon>Enterobacterales</taxon>
        <taxon>Enterobacteriaceae</taxon>
        <taxon>Salmonella</taxon>
    </lineage>
</organism>
<sequence>MAKGQSLQDPFLNALRRERVPVSIYLVNGIKLQGQIESFDQFVILLKNTVSQMVYKHAISTVVPSRPVSHHSNNAGGGASNNYHHGSNAQGSTAQQDSEETE</sequence>
<name>HFQ_SALTI</name>
<feature type="initiator methionine" description="Removed" evidence="1">
    <location>
        <position position="1"/>
    </location>
</feature>
<feature type="chain" id="PRO_0000095605" description="RNA-binding protein Hfq">
    <location>
        <begin position="2"/>
        <end position="102"/>
    </location>
</feature>
<feature type="domain" description="Sm" evidence="3">
    <location>
        <begin position="9"/>
        <end position="68"/>
    </location>
</feature>
<feature type="region of interest" description="Disordered" evidence="4">
    <location>
        <begin position="63"/>
        <end position="102"/>
    </location>
</feature>
<feature type="compositionally biased region" description="Low complexity" evidence="4">
    <location>
        <begin position="70"/>
        <end position="88"/>
    </location>
</feature>
<reference key="1">
    <citation type="journal article" date="2001" name="Nature">
        <title>Complete genome sequence of a multiple drug resistant Salmonella enterica serovar Typhi CT18.</title>
        <authorList>
            <person name="Parkhill J."/>
            <person name="Dougan G."/>
            <person name="James K.D."/>
            <person name="Thomson N.R."/>
            <person name="Pickard D."/>
            <person name="Wain J."/>
            <person name="Churcher C.M."/>
            <person name="Mungall K.L."/>
            <person name="Bentley S.D."/>
            <person name="Holden M.T.G."/>
            <person name="Sebaihia M."/>
            <person name="Baker S."/>
            <person name="Basham D."/>
            <person name="Brooks K."/>
            <person name="Chillingworth T."/>
            <person name="Connerton P."/>
            <person name="Cronin A."/>
            <person name="Davis P."/>
            <person name="Davies R.M."/>
            <person name="Dowd L."/>
            <person name="White N."/>
            <person name="Farrar J."/>
            <person name="Feltwell T."/>
            <person name="Hamlin N."/>
            <person name="Haque A."/>
            <person name="Hien T.T."/>
            <person name="Holroyd S."/>
            <person name="Jagels K."/>
            <person name="Krogh A."/>
            <person name="Larsen T.S."/>
            <person name="Leather S."/>
            <person name="Moule S."/>
            <person name="O'Gaora P."/>
            <person name="Parry C."/>
            <person name="Quail M.A."/>
            <person name="Rutherford K.M."/>
            <person name="Simmonds M."/>
            <person name="Skelton J."/>
            <person name="Stevens K."/>
            <person name="Whitehead S."/>
            <person name="Barrell B.G."/>
        </authorList>
    </citation>
    <scope>NUCLEOTIDE SEQUENCE [LARGE SCALE GENOMIC DNA]</scope>
    <source>
        <strain>CT18</strain>
    </source>
</reference>
<reference key="2">
    <citation type="journal article" date="2003" name="J. Bacteriol.">
        <title>Comparative genomics of Salmonella enterica serovar Typhi strains Ty2 and CT18.</title>
        <authorList>
            <person name="Deng W."/>
            <person name="Liou S.-R."/>
            <person name="Plunkett G. III"/>
            <person name="Mayhew G.F."/>
            <person name="Rose D.J."/>
            <person name="Burland V."/>
            <person name="Kodoyianni V."/>
            <person name="Schwartz D.C."/>
            <person name="Blattner F.R."/>
        </authorList>
    </citation>
    <scope>NUCLEOTIDE SEQUENCE [LARGE SCALE GENOMIC DNA]</scope>
    <source>
        <strain>ATCC 700931 / Ty2</strain>
    </source>
</reference>
<proteinExistence type="inferred from homology"/>
<evidence type="ECO:0000250" key="1"/>
<evidence type="ECO:0000255" key="2">
    <source>
        <dbReference type="HAMAP-Rule" id="MF_00436"/>
    </source>
</evidence>
<evidence type="ECO:0000255" key="3">
    <source>
        <dbReference type="PROSITE-ProRule" id="PRU01346"/>
    </source>
</evidence>
<evidence type="ECO:0000256" key="4">
    <source>
        <dbReference type="SAM" id="MobiDB-lite"/>
    </source>
</evidence>
<protein>
    <recommendedName>
        <fullName evidence="2">RNA-binding protein Hfq</fullName>
    </recommendedName>
</protein>